<keyword id="KW-0067">ATP-binding</keyword>
<keyword id="KW-0963">Cytoplasm</keyword>
<keyword id="KW-0436">Ligase</keyword>
<keyword id="KW-0547">Nucleotide-binding</keyword>
<keyword id="KW-1185">Reference proteome</keyword>
<keyword id="KW-0819">tRNA processing</keyword>
<reference key="1">
    <citation type="journal article" date="1994" name="DNA Res.">
        <title>Systematic sequencing of the 180 kilobase region of the Bacillus subtilis chromosome containing the replication origin.</title>
        <authorList>
            <person name="Ogasawara N."/>
            <person name="Nakai S."/>
            <person name="Yoshikawa H."/>
        </authorList>
    </citation>
    <scope>NUCLEOTIDE SEQUENCE [GENOMIC DNA]</scope>
    <source>
        <strain>168</strain>
    </source>
</reference>
<reference key="2">
    <citation type="journal article" date="1997" name="Nature">
        <title>The complete genome sequence of the Gram-positive bacterium Bacillus subtilis.</title>
        <authorList>
            <person name="Kunst F."/>
            <person name="Ogasawara N."/>
            <person name="Moszer I."/>
            <person name="Albertini A.M."/>
            <person name="Alloni G."/>
            <person name="Azevedo V."/>
            <person name="Bertero M.G."/>
            <person name="Bessieres P."/>
            <person name="Bolotin A."/>
            <person name="Borchert S."/>
            <person name="Borriss R."/>
            <person name="Boursier L."/>
            <person name="Brans A."/>
            <person name="Braun M."/>
            <person name="Brignell S.C."/>
            <person name="Bron S."/>
            <person name="Brouillet S."/>
            <person name="Bruschi C.V."/>
            <person name="Caldwell B."/>
            <person name="Capuano V."/>
            <person name="Carter N.M."/>
            <person name="Choi S.-K."/>
            <person name="Codani J.-J."/>
            <person name="Connerton I.F."/>
            <person name="Cummings N.J."/>
            <person name="Daniel R.A."/>
            <person name="Denizot F."/>
            <person name="Devine K.M."/>
            <person name="Duesterhoeft A."/>
            <person name="Ehrlich S.D."/>
            <person name="Emmerson P.T."/>
            <person name="Entian K.-D."/>
            <person name="Errington J."/>
            <person name="Fabret C."/>
            <person name="Ferrari E."/>
            <person name="Foulger D."/>
            <person name="Fritz C."/>
            <person name="Fujita M."/>
            <person name="Fujita Y."/>
            <person name="Fuma S."/>
            <person name="Galizzi A."/>
            <person name="Galleron N."/>
            <person name="Ghim S.-Y."/>
            <person name="Glaser P."/>
            <person name="Goffeau A."/>
            <person name="Golightly E.J."/>
            <person name="Grandi G."/>
            <person name="Guiseppi G."/>
            <person name="Guy B.J."/>
            <person name="Haga K."/>
            <person name="Haiech J."/>
            <person name="Harwood C.R."/>
            <person name="Henaut A."/>
            <person name="Hilbert H."/>
            <person name="Holsappel S."/>
            <person name="Hosono S."/>
            <person name="Hullo M.-F."/>
            <person name="Itaya M."/>
            <person name="Jones L.-M."/>
            <person name="Joris B."/>
            <person name="Karamata D."/>
            <person name="Kasahara Y."/>
            <person name="Klaerr-Blanchard M."/>
            <person name="Klein C."/>
            <person name="Kobayashi Y."/>
            <person name="Koetter P."/>
            <person name="Koningstein G."/>
            <person name="Krogh S."/>
            <person name="Kumano M."/>
            <person name="Kurita K."/>
            <person name="Lapidus A."/>
            <person name="Lardinois S."/>
            <person name="Lauber J."/>
            <person name="Lazarevic V."/>
            <person name="Lee S.-M."/>
            <person name="Levine A."/>
            <person name="Liu H."/>
            <person name="Masuda S."/>
            <person name="Mauel C."/>
            <person name="Medigue C."/>
            <person name="Medina N."/>
            <person name="Mellado R.P."/>
            <person name="Mizuno M."/>
            <person name="Moestl D."/>
            <person name="Nakai S."/>
            <person name="Noback M."/>
            <person name="Noone D."/>
            <person name="O'Reilly M."/>
            <person name="Ogawa K."/>
            <person name="Ogiwara A."/>
            <person name="Oudega B."/>
            <person name="Park S.-H."/>
            <person name="Parro V."/>
            <person name="Pohl T.M."/>
            <person name="Portetelle D."/>
            <person name="Porwollik S."/>
            <person name="Prescott A.M."/>
            <person name="Presecan E."/>
            <person name="Pujic P."/>
            <person name="Purnelle B."/>
            <person name="Rapoport G."/>
            <person name="Rey M."/>
            <person name="Reynolds S."/>
            <person name="Rieger M."/>
            <person name="Rivolta C."/>
            <person name="Rocha E."/>
            <person name="Roche B."/>
            <person name="Rose M."/>
            <person name="Sadaie Y."/>
            <person name="Sato T."/>
            <person name="Scanlan E."/>
            <person name="Schleich S."/>
            <person name="Schroeter R."/>
            <person name="Scoffone F."/>
            <person name="Sekiguchi J."/>
            <person name="Sekowska A."/>
            <person name="Seror S.J."/>
            <person name="Serror P."/>
            <person name="Shin B.-S."/>
            <person name="Soldo B."/>
            <person name="Sorokin A."/>
            <person name="Tacconi E."/>
            <person name="Takagi T."/>
            <person name="Takahashi H."/>
            <person name="Takemaru K."/>
            <person name="Takeuchi M."/>
            <person name="Tamakoshi A."/>
            <person name="Tanaka T."/>
            <person name="Terpstra P."/>
            <person name="Tognoni A."/>
            <person name="Tosato V."/>
            <person name="Uchiyama S."/>
            <person name="Vandenbol M."/>
            <person name="Vannier F."/>
            <person name="Vassarotti A."/>
            <person name="Viari A."/>
            <person name="Wambutt R."/>
            <person name="Wedler E."/>
            <person name="Wedler H."/>
            <person name="Weitzenegger T."/>
            <person name="Winters P."/>
            <person name="Wipat A."/>
            <person name="Yamamoto H."/>
            <person name="Yamane K."/>
            <person name="Yasumoto K."/>
            <person name="Yata K."/>
            <person name="Yoshida K."/>
            <person name="Yoshikawa H.-F."/>
            <person name="Zumstein E."/>
            <person name="Yoshikawa H."/>
            <person name="Danchin A."/>
        </authorList>
    </citation>
    <scope>NUCLEOTIDE SEQUENCE [LARGE SCALE GENOMIC DNA]</scope>
    <source>
        <strain>168</strain>
    </source>
</reference>
<reference key="3">
    <citation type="journal article" date="2003" name="Mol. Cell">
        <title>An RNA-modifying enzyme that governs both the codon and amino acid specificities of isoleucine tRNA.</title>
        <authorList>
            <person name="Soma A."/>
            <person name="Ikeuchi Y."/>
            <person name="Kanemasa S."/>
            <person name="Kobayashi K."/>
            <person name="Ogasawara N."/>
            <person name="Ote T."/>
            <person name="Kato J."/>
            <person name="Watanabe K."/>
            <person name="Sekine Y."/>
            <person name="Suzuki T."/>
        </authorList>
    </citation>
    <scope>FUNCTION</scope>
    <scope>CATALYTIC ACTIVITY</scope>
    <scope>CHARACTERIZATION</scope>
</reference>
<feature type="chain" id="PRO_0000181650" description="tRNA(Ile)-lysidine synthase">
    <location>
        <begin position="1"/>
        <end position="472"/>
    </location>
</feature>
<feature type="binding site" evidence="1">
    <location>
        <begin position="25"/>
        <end position="30"/>
    </location>
    <ligand>
        <name>ATP</name>
        <dbReference type="ChEBI" id="CHEBI:30616"/>
    </ligand>
</feature>
<protein>
    <recommendedName>
        <fullName>tRNA(Ile)-lysidine synthase</fullName>
        <ecNumber>6.3.4.19</ecNumber>
    </recommendedName>
    <alternativeName>
        <fullName>tRNA(Ile)-2-lysyl-cytidine synthase</fullName>
    </alternativeName>
    <alternativeName>
        <fullName>tRNA(Ile)-lysidine synthetase</fullName>
    </alternativeName>
</protein>
<sequence length="472" mass="53464">MKSVKDFLNKHNLTLKGATIIVGVSGGPDSMALLHALHTLCGRSANVIAAHVDHRFRGAESEEDMRFVQAYCKAEQLVCETAQINVTAYAQEKGLNKQAAARDCRYQFFEEIMSKHQADYLALAHHGDDQVETMLMKLAKGTLGTGLAGMQPVRRFGTGRIIRPFLTITKEEILHYCHENGLSYRTDESNAKDDYTRNRFRKTVLPFLKQESPDVHKRFQKVSEALTEDEQFLQSLTKDEMNKVITSQSNTSVEINSSQLLALPMPLQRRGVQLILNYLYENVPSSFSAHHIQQFLDWAENGGPSGVLDFPKGLKVVKSYQTCLFTFEQWQCKNVPFEYQISGAADETAVLPNGYLIEARHYADSPEEHGNAVFITSEKKVRFPLTIRTRKAGDRIKLKGMNGSKKVKDIFIDKKLPLQERDNWPIVTDASGEIIWIPGLKKSIFEDLVIPNSDRIVLQYRQHEKCRGQAKS</sequence>
<dbReference type="EC" id="6.3.4.19"/>
<dbReference type="EMBL" id="D26185">
    <property type="protein sequence ID" value="BAA05302.1"/>
    <property type="status" value="ALT_INIT"/>
    <property type="molecule type" value="Genomic_DNA"/>
</dbReference>
<dbReference type="EMBL" id="AL009126">
    <property type="protein sequence ID" value="CAB11843.1"/>
    <property type="molecule type" value="Genomic_DNA"/>
</dbReference>
<dbReference type="PIR" id="S66097">
    <property type="entry name" value="S66097"/>
</dbReference>
<dbReference type="RefSeq" id="NP_387948.1">
    <property type="nucleotide sequence ID" value="NC_000964.3"/>
</dbReference>
<dbReference type="RefSeq" id="WP_003243704.1">
    <property type="nucleotide sequence ID" value="NZ_OZ025638.1"/>
</dbReference>
<dbReference type="SMR" id="P37563"/>
<dbReference type="FunCoup" id="P37563">
    <property type="interactions" value="145"/>
</dbReference>
<dbReference type="IntAct" id="P37563">
    <property type="interactions" value="2"/>
</dbReference>
<dbReference type="STRING" id="224308.BSU00670"/>
<dbReference type="PaxDb" id="224308-BSU00670"/>
<dbReference type="EnsemblBacteria" id="CAB11843">
    <property type="protein sequence ID" value="CAB11843"/>
    <property type="gene ID" value="BSU_00670"/>
</dbReference>
<dbReference type="GeneID" id="936922"/>
<dbReference type="KEGG" id="bsu:BSU00670"/>
<dbReference type="PATRIC" id="fig|224308.179.peg.67"/>
<dbReference type="eggNOG" id="COG0037">
    <property type="taxonomic scope" value="Bacteria"/>
</dbReference>
<dbReference type="InParanoid" id="P37563"/>
<dbReference type="OrthoDB" id="9807403at2"/>
<dbReference type="PhylomeDB" id="P37563"/>
<dbReference type="BioCyc" id="BSUB:BSU00670-MONOMER"/>
<dbReference type="BRENDA" id="6.3.4.19">
    <property type="organism ID" value="658"/>
</dbReference>
<dbReference type="Proteomes" id="UP000001570">
    <property type="component" value="Chromosome"/>
</dbReference>
<dbReference type="GO" id="GO:0005737">
    <property type="term" value="C:cytoplasm"/>
    <property type="evidence" value="ECO:0007669"/>
    <property type="project" value="UniProtKB-SubCell"/>
</dbReference>
<dbReference type="GO" id="GO:0005524">
    <property type="term" value="F:ATP binding"/>
    <property type="evidence" value="ECO:0007669"/>
    <property type="project" value="UniProtKB-UniRule"/>
</dbReference>
<dbReference type="GO" id="GO:0032267">
    <property type="term" value="F:tRNA(Ile)-lysidine synthase activity"/>
    <property type="evidence" value="ECO:0007669"/>
    <property type="project" value="UniProtKB-EC"/>
</dbReference>
<dbReference type="GO" id="GO:0006400">
    <property type="term" value="P:tRNA modification"/>
    <property type="evidence" value="ECO:0007669"/>
    <property type="project" value="UniProtKB-UniRule"/>
</dbReference>
<dbReference type="CDD" id="cd01992">
    <property type="entry name" value="TilS_N"/>
    <property type="match status" value="1"/>
</dbReference>
<dbReference type="Gene3D" id="3.30.465.60">
    <property type="match status" value="1"/>
</dbReference>
<dbReference type="Gene3D" id="3.40.50.620">
    <property type="entry name" value="HUPs"/>
    <property type="match status" value="1"/>
</dbReference>
<dbReference type="HAMAP" id="MF_01161">
    <property type="entry name" value="tRNA_Ile_lys_synt"/>
    <property type="match status" value="1"/>
</dbReference>
<dbReference type="InterPro" id="IPR012796">
    <property type="entry name" value="Lysidine-tRNA-synth_C"/>
</dbReference>
<dbReference type="InterPro" id="IPR014729">
    <property type="entry name" value="Rossmann-like_a/b/a_fold"/>
</dbReference>
<dbReference type="InterPro" id="IPR011063">
    <property type="entry name" value="TilS/TtcA_N"/>
</dbReference>
<dbReference type="InterPro" id="IPR012094">
    <property type="entry name" value="tRNA_Ile_lys_synt"/>
</dbReference>
<dbReference type="InterPro" id="IPR012795">
    <property type="entry name" value="tRNA_Ile_lys_synt_N"/>
</dbReference>
<dbReference type="InterPro" id="IPR015262">
    <property type="entry name" value="tRNA_Ile_lys_synt_subst-bd"/>
</dbReference>
<dbReference type="NCBIfam" id="TIGR02433">
    <property type="entry name" value="lysidine_TilS_C"/>
    <property type="match status" value="1"/>
</dbReference>
<dbReference type="NCBIfam" id="TIGR02432">
    <property type="entry name" value="lysidine_TilS_N"/>
    <property type="match status" value="1"/>
</dbReference>
<dbReference type="PANTHER" id="PTHR43033">
    <property type="entry name" value="TRNA(ILE)-LYSIDINE SYNTHASE-RELATED"/>
    <property type="match status" value="1"/>
</dbReference>
<dbReference type="PANTHER" id="PTHR43033:SF1">
    <property type="entry name" value="TRNA(ILE)-LYSIDINE SYNTHASE-RELATED"/>
    <property type="match status" value="1"/>
</dbReference>
<dbReference type="Pfam" id="PF01171">
    <property type="entry name" value="ATP_bind_3"/>
    <property type="match status" value="1"/>
</dbReference>
<dbReference type="Pfam" id="PF09179">
    <property type="entry name" value="TilS"/>
    <property type="match status" value="1"/>
</dbReference>
<dbReference type="Pfam" id="PF11734">
    <property type="entry name" value="TilS_C"/>
    <property type="match status" value="1"/>
</dbReference>
<dbReference type="SMART" id="SM00977">
    <property type="entry name" value="TilS_C"/>
    <property type="match status" value="1"/>
</dbReference>
<dbReference type="SUPFAM" id="SSF52402">
    <property type="entry name" value="Adenine nucleotide alpha hydrolases-like"/>
    <property type="match status" value="1"/>
</dbReference>
<dbReference type="SUPFAM" id="SSF82829">
    <property type="entry name" value="MesJ substrate recognition domain-like"/>
    <property type="match status" value="1"/>
</dbReference>
<dbReference type="SUPFAM" id="SSF56037">
    <property type="entry name" value="PheT/TilS domain"/>
    <property type="match status" value="1"/>
</dbReference>
<gene>
    <name type="primary">tilS</name>
    <name type="synonym">yacA</name>
    <name type="ordered locus">BSU00670</name>
</gene>
<accession>P37563</accession>
<accession>O31416</accession>
<name>TILS_BACSU</name>
<organism>
    <name type="scientific">Bacillus subtilis (strain 168)</name>
    <dbReference type="NCBI Taxonomy" id="224308"/>
    <lineage>
        <taxon>Bacteria</taxon>
        <taxon>Bacillati</taxon>
        <taxon>Bacillota</taxon>
        <taxon>Bacilli</taxon>
        <taxon>Bacillales</taxon>
        <taxon>Bacillaceae</taxon>
        <taxon>Bacillus</taxon>
    </lineage>
</organism>
<comment type="function">
    <text evidence="2">Ligates lysine onto the cytidine present at position 34 of the AUA codon-specific tRNA(Ile) that contains the anticodon CAU, in an ATP-dependent manner. Cytidine is converted to lysidine, thus changing the amino acid specificity of the tRNA from methionine to isoleucine.</text>
</comment>
<comment type="catalytic activity">
    <reaction evidence="2">
        <text>cytidine(34) in tRNA(Ile2) + L-lysine + ATP = lysidine(34) in tRNA(Ile2) + AMP + diphosphate + H(+)</text>
        <dbReference type="Rhea" id="RHEA:43744"/>
        <dbReference type="Rhea" id="RHEA-COMP:10625"/>
        <dbReference type="Rhea" id="RHEA-COMP:10670"/>
        <dbReference type="ChEBI" id="CHEBI:15378"/>
        <dbReference type="ChEBI" id="CHEBI:30616"/>
        <dbReference type="ChEBI" id="CHEBI:32551"/>
        <dbReference type="ChEBI" id="CHEBI:33019"/>
        <dbReference type="ChEBI" id="CHEBI:82748"/>
        <dbReference type="ChEBI" id="CHEBI:83665"/>
        <dbReference type="ChEBI" id="CHEBI:456215"/>
        <dbReference type="EC" id="6.3.4.19"/>
    </reaction>
</comment>
<comment type="subcellular location">
    <subcellularLocation>
        <location evidence="3">Cytoplasm</location>
    </subcellularLocation>
</comment>
<comment type="domain">
    <text>The N-terminal region contains the highly conserved SGGXDS motif, predicted to be a P-loop motif involved in ATP binding.</text>
</comment>
<comment type="similarity">
    <text evidence="3">Belongs to the tRNA(Ile)-lysidine synthase family.</text>
</comment>
<comment type="sequence caution" evidence="3">
    <conflict type="erroneous initiation">
        <sequence resource="EMBL-CDS" id="BAA05302"/>
    </conflict>
</comment>
<evidence type="ECO:0000255" key="1"/>
<evidence type="ECO:0000269" key="2">
    <source>
    </source>
</evidence>
<evidence type="ECO:0000305" key="3"/>
<proteinExistence type="evidence at protein level"/>